<evidence type="ECO:0000255" key="1">
    <source>
        <dbReference type="HAMAP-Rule" id="MF_01382"/>
    </source>
</evidence>
<evidence type="ECO:0000256" key="2">
    <source>
        <dbReference type="SAM" id="MobiDB-lite"/>
    </source>
</evidence>
<feature type="chain" id="PRO_0000318472" description="Protein translocase subunit SecA">
    <location>
        <begin position="1"/>
        <end position="954"/>
    </location>
</feature>
<feature type="region of interest" description="Disordered" evidence="2">
    <location>
        <begin position="520"/>
        <end position="549"/>
    </location>
</feature>
<feature type="binding site" evidence="1">
    <location>
        <position position="86"/>
    </location>
    <ligand>
        <name>ATP</name>
        <dbReference type="ChEBI" id="CHEBI:30616"/>
    </ligand>
</feature>
<feature type="binding site" evidence="1">
    <location>
        <begin position="104"/>
        <end position="108"/>
    </location>
    <ligand>
        <name>ATP</name>
        <dbReference type="ChEBI" id="CHEBI:30616"/>
    </ligand>
</feature>
<feature type="binding site" evidence="1">
    <location>
        <position position="494"/>
    </location>
    <ligand>
        <name>ATP</name>
        <dbReference type="ChEBI" id="CHEBI:30616"/>
    </ligand>
</feature>
<comment type="function">
    <text evidence="1">Part of the Sec protein translocase complex. Interacts with the SecYEG preprotein conducting channel. Has a central role in coupling the hydrolysis of ATP to the transfer of proteins into and across the cell membrane, serving as an ATP-driven molecular motor driving the stepwise translocation of polypeptide chains across the membrane.</text>
</comment>
<comment type="function">
    <text evidence="1">Probably participates in protein translocation into and across both the cytoplasmic and thylakoid membranes in cyanobacterial cells.</text>
</comment>
<comment type="catalytic activity">
    <reaction evidence="1">
        <text>ATP + H2O + cellular proteinSide 1 = ADP + phosphate + cellular proteinSide 2.</text>
        <dbReference type="EC" id="7.4.2.8"/>
    </reaction>
</comment>
<comment type="subunit">
    <text evidence="1">Monomer and homodimer. Part of the essential Sec protein translocation apparatus which comprises SecA, SecYEG and auxiliary proteins SecDF. Other proteins may also be involved.</text>
</comment>
<comment type="subcellular location">
    <subcellularLocation>
        <location evidence="1">Cell inner membrane</location>
        <topology evidence="1">Peripheral membrane protein</topology>
        <orientation evidence="1">Cytoplasmic side</orientation>
    </subcellularLocation>
    <subcellularLocation>
        <location evidence="1">Cellular thylakoid membrane</location>
        <topology evidence="1">Peripheral membrane protein</topology>
        <orientation evidence="1">Cytoplasmic side</orientation>
    </subcellularLocation>
    <subcellularLocation>
        <location evidence="1">Cytoplasm</location>
    </subcellularLocation>
</comment>
<comment type="similarity">
    <text evidence="1">Belongs to the SecA family.</text>
</comment>
<keyword id="KW-0067">ATP-binding</keyword>
<keyword id="KW-0997">Cell inner membrane</keyword>
<keyword id="KW-1003">Cell membrane</keyword>
<keyword id="KW-0963">Cytoplasm</keyword>
<keyword id="KW-0472">Membrane</keyword>
<keyword id="KW-0547">Nucleotide-binding</keyword>
<keyword id="KW-0653">Protein transport</keyword>
<keyword id="KW-0793">Thylakoid</keyword>
<keyword id="KW-1278">Translocase</keyword>
<keyword id="KW-0811">Translocation</keyword>
<keyword id="KW-0813">Transport</keyword>
<dbReference type="EC" id="7.4.2.8" evidence="1"/>
<dbReference type="EMBL" id="CP000239">
    <property type="protein sequence ID" value="ABC98969.1"/>
    <property type="molecule type" value="Genomic_DNA"/>
</dbReference>
<dbReference type="RefSeq" id="WP_011429653.1">
    <property type="nucleotide sequence ID" value="NC_007775.1"/>
</dbReference>
<dbReference type="SMR" id="Q2JW99"/>
<dbReference type="STRING" id="321327.CYA_0762"/>
<dbReference type="KEGG" id="cya:CYA_0762"/>
<dbReference type="eggNOG" id="COG0653">
    <property type="taxonomic scope" value="Bacteria"/>
</dbReference>
<dbReference type="HOGENOM" id="CLU_005314_3_0_3"/>
<dbReference type="OrthoDB" id="9805579at2"/>
<dbReference type="Proteomes" id="UP000008818">
    <property type="component" value="Chromosome"/>
</dbReference>
<dbReference type="GO" id="GO:0031522">
    <property type="term" value="C:cell envelope Sec protein transport complex"/>
    <property type="evidence" value="ECO:0007669"/>
    <property type="project" value="TreeGrafter"/>
</dbReference>
<dbReference type="GO" id="GO:0005829">
    <property type="term" value="C:cytosol"/>
    <property type="evidence" value="ECO:0007669"/>
    <property type="project" value="TreeGrafter"/>
</dbReference>
<dbReference type="GO" id="GO:0031676">
    <property type="term" value="C:plasma membrane-derived thylakoid membrane"/>
    <property type="evidence" value="ECO:0007669"/>
    <property type="project" value="UniProtKB-SubCell"/>
</dbReference>
<dbReference type="GO" id="GO:0005524">
    <property type="term" value="F:ATP binding"/>
    <property type="evidence" value="ECO:0007669"/>
    <property type="project" value="UniProtKB-UniRule"/>
</dbReference>
<dbReference type="GO" id="GO:0008564">
    <property type="term" value="F:protein-exporting ATPase activity"/>
    <property type="evidence" value="ECO:0007669"/>
    <property type="project" value="UniProtKB-EC"/>
</dbReference>
<dbReference type="GO" id="GO:0065002">
    <property type="term" value="P:intracellular protein transmembrane transport"/>
    <property type="evidence" value="ECO:0007669"/>
    <property type="project" value="UniProtKB-UniRule"/>
</dbReference>
<dbReference type="GO" id="GO:0017038">
    <property type="term" value="P:protein import"/>
    <property type="evidence" value="ECO:0007669"/>
    <property type="project" value="InterPro"/>
</dbReference>
<dbReference type="GO" id="GO:0006605">
    <property type="term" value="P:protein targeting"/>
    <property type="evidence" value="ECO:0007669"/>
    <property type="project" value="UniProtKB-UniRule"/>
</dbReference>
<dbReference type="GO" id="GO:0043952">
    <property type="term" value="P:protein transport by the Sec complex"/>
    <property type="evidence" value="ECO:0007669"/>
    <property type="project" value="TreeGrafter"/>
</dbReference>
<dbReference type="CDD" id="cd17928">
    <property type="entry name" value="DEXDc_SecA"/>
    <property type="match status" value="1"/>
</dbReference>
<dbReference type="CDD" id="cd18803">
    <property type="entry name" value="SF2_C_secA"/>
    <property type="match status" value="1"/>
</dbReference>
<dbReference type="FunFam" id="3.90.1440.10:FF:000003">
    <property type="entry name" value="Preprotein translocase SecA subunit"/>
    <property type="match status" value="1"/>
</dbReference>
<dbReference type="FunFam" id="3.40.50.300:FF:000429">
    <property type="entry name" value="Preprotein translocase subunit SecA"/>
    <property type="match status" value="1"/>
</dbReference>
<dbReference type="FunFam" id="3.40.50.300:FF:000531">
    <property type="entry name" value="Preprotein translocase subunit SecA"/>
    <property type="match status" value="1"/>
</dbReference>
<dbReference type="FunFam" id="1.10.3060.10:FF:000003">
    <property type="entry name" value="Protein translocase subunit SecA"/>
    <property type="match status" value="1"/>
</dbReference>
<dbReference type="FunFam" id="3.40.50.300:FF:000334">
    <property type="entry name" value="Protein translocase subunit SecA"/>
    <property type="match status" value="1"/>
</dbReference>
<dbReference type="Gene3D" id="1.10.3060.10">
    <property type="entry name" value="Helical scaffold and wing domains of SecA"/>
    <property type="match status" value="1"/>
</dbReference>
<dbReference type="Gene3D" id="3.40.50.300">
    <property type="entry name" value="P-loop containing nucleotide triphosphate hydrolases"/>
    <property type="match status" value="2"/>
</dbReference>
<dbReference type="Gene3D" id="3.90.1440.10">
    <property type="entry name" value="SecA, preprotein cross-linking domain"/>
    <property type="match status" value="1"/>
</dbReference>
<dbReference type="HAMAP" id="MF_01382">
    <property type="entry name" value="SecA"/>
    <property type="match status" value="1"/>
</dbReference>
<dbReference type="InterPro" id="IPR014001">
    <property type="entry name" value="Helicase_ATP-bd"/>
</dbReference>
<dbReference type="InterPro" id="IPR027417">
    <property type="entry name" value="P-loop_NTPase"/>
</dbReference>
<dbReference type="InterPro" id="IPR000185">
    <property type="entry name" value="SecA"/>
</dbReference>
<dbReference type="InterPro" id="IPR020937">
    <property type="entry name" value="SecA_CS"/>
</dbReference>
<dbReference type="InterPro" id="IPR011115">
    <property type="entry name" value="SecA_DEAD"/>
</dbReference>
<dbReference type="InterPro" id="IPR014018">
    <property type="entry name" value="SecA_motor_DEAD"/>
</dbReference>
<dbReference type="InterPro" id="IPR011130">
    <property type="entry name" value="SecA_preprotein_X-link_dom"/>
</dbReference>
<dbReference type="InterPro" id="IPR044722">
    <property type="entry name" value="SecA_SF2_C"/>
</dbReference>
<dbReference type="InterPro" id="IPR011116">
    <property type="entry name" value="SecA_Wing/Scaffold"/>
</dbReference>
<dbReference type="InterPro" id="IPR036266">
    <property type="entry name" value="SecA_Wing/Scaffold_sf"/>
</dbReference>
<dbReference type="InterPro" id="IPR036670">
    <property type="entry name" value="SecA_X-link_sf"/>
</dbReference>
<dbReference type="NCBIfam" id="NF009538">
    <property type="entry name" value="PRK12904.1"/>
    <property type="match status" value="1"/>
</dbReference>
<dbReference type="NCBIfam" id="TIGR00963">
    <property type="entry name" value="secA"/>
    <property type="match status" value="1"/>
</dbReference>
<dbReference type="PANTHER" id="PTHR30612:SF0">
    <property type="entry name" value="CHLOROPLAST PROTEIN-TRANSPORTING ATPASE"/>
    <property type="match status" value="1"/>
</dbReference>
<dbReference type="PANTHER" id="PTHR30612">
    <property type="entry name" value="SECA INNER MEMBRANE COMPONENT OF SEC PROTEIN SECRETION SYSTEM"/>
    <property type="match status" value="1"/>
</dbReference>
<dbReference type="Pfam" id="PF21090">
    <property type="entry name" value="P-loop_SecA"/>
    <property type="match status" value="1"/>
</dbReference>
<dbReference type="Pfam" id="PF07517">
    <property type="entry name" value="SecA_DEAD"/>
    <property type="match status" value="1"/>
</dbReference>
<dbReference type="Pfam" id="PF01043">
    <property type="entry name" value="SecA_PP_bind"/>
    <property type="match status" value="1"/>
</dbReference>
<dbReference type="Pfam" id="PF07516">
    <property type="entry name" value="SecA_SW"/>
    <property type="match status" value="1"/>
</dbReference>
<dbReference type="PRINTS" id="PR00906">
    <property type="entry name" value="SECA"/>
</dbReference>
<dbReference type="SMART" id="SM00957">
    <property type="entry name" value="SecA_DEAD"/>
    <property type="match status" value="1"/>
</dbReference>
<dbReference type="SMART" id="SM00958">
    <property type="entry name" value="SecA_PP_bind"/>
    <property type="match status" value="1"/>
</dbReference>
<dbReference type="SUPFAM" id="SSF81886">
    <property type="entry name" value="Helical scaffold and wing domains of SecA"/>
    <property type="match status" value="1"/>
</dbReference>
<dbReference type="SUPFAM" id="SSF52540">
    <property type="entry name" value="P-loop containing nucleoside triphosphate hydrolases"/>
    <property type="match status" value="2"/>
</dbReference>
<dbReference type="SUPFAM" id="SSF81767">
    <property type="entry name" value="Pre-protein crosslinking domain of SecA"/>
    <property type="match status" value="1"/>
</dbReference>
<dbReference type="PROSITE" id="PS01312">
    <property type="entry name" value="SECA"/>
    <property type="match status" value="1"/>
</dbReference>
<dbReference type="PROSITE" id="PS51196">
    <property type="entry name" value="SECA_MOTOR_DEAD"/>
    <property type="match status" value="1"/>
</dbReference>
<gene>
    <name evidence="1" type="primary">secA</name>
    <name type="ordered locus">CYA_0762</name>
</gene>
<name>SECA_SYNJA</name>
<proteinExistence type="inferred from homology"/>
<reference key="1">
    <citation type="journal article" date="2007" name="ISME J.">
        <title>Population level functional diversity in a microbial community revealed by comparative genomic and metagenomic analyses.</title>
        <authorList>
            <person name="Bhaya D."/>
            <person name="Grossman A.R."/>
            <person name="Steunou A.-S."/>
            <person name="Khuri N."/>
            <person name="Cohan F.M."/>
            <person name="Hamamura N."/>
            <person name="Melendrez M.C."/>
            <person name="Bateson M.M."/>
            <person name="Ward D.M."/>
            <person name="Heidelberg J.F."/>
        </authorList>
    </citation>
    <scope>NUCLEOTIDE SEQUENCE [LARGE SCALE GENOMIC DNA]</scope>
    <source>
        <strain>JA-3-3Ab</strain>
    </source>
</reference>
<accession>Q2JW99</accession>
<protein>
    <recommendedName>
        <fullName evidence="1">Protein translocase subunit SecA</fullName>
        <ecNumber evidence="1">7.4.2.8</ecNumber>
    </recommendedName>
</protein>
<sequence>MLQALQKLLGDPNERKIRKYLPVVKLINSLEIEIASLSDAELRAKTTEFRQRLDRGESLDDLLPEAFAVVREAAKRVLNLRHYDVQLIGGMVLHEGQIAEMKTGEGKTLVATLPAYLNGLTGKGVHIVTVNGYLARRDSEWMGQVHRFLGLTVGLVQEGMSTDEKRRSYHCDITYCTNSELGFDYLRDNMATDIKEVMQRPFNYCIIDEVDSILIDEARTPLIISGQMARPSEKYLKAAQVARELIRDEHYEVDEKARNVILTDEGFEAAERLLGVSDLFDPKDPWAHFVFNAVKAKELFIRDVHYIVRNQEVVIVDEFTGRVLPGRRWSDGLHQAVEAKEGVPIQNESQTLATITYQNLFLLYPKLSGMTGTARTEEAEFSKTYNLEVTVIPTNRPIRRKDAPDLVYKTENAKWKAVAEEIAHMHAQGRPVLVGTTSVEKSERLSAMLKEMGIPHNLLNAKPENVEREAEIIAQAGRKGAVTIATNMAGRGTDIILGGNAEYMARLKLRERLMPKLVQLDPDNPLGSASTTSRGGGQGFGPASPKPKKSWTVVSPNFYPCELSARTSQALDEVVAAAVAKYGLNRLPELVVEDLIAVASEKAPVQDPLILQLREVYNSIKAEYEKVTEAEHEEVVRLGGLHVIGTERHESRRIDNQLRGRAGRQGDPGSSRFFLSLEDNLLKIFGGERVAKLMDMFRVDEDMPIEHPLLSSSLENAQRKVEVYYFDLRKQVFEYDEVMNNQRRAIYSERRRILEGENLKPKILDYMRKTVEEIVRAHVNPELPPEEWEIDKLTAKMQEFVPLLKENLKADDLRDLSYQEILDHLIKQAELAYEAKEAFLDTFEPGLMRKAERFFLLQQVDTLWREHLQQMEALREAVGLRGYGQRDPLIEYKNEGYELFLEMMDNIRRNTVYNLFVFTPQLVQVPQVAQAVPAQAVAASPETGGVVEADFAED</sequence>
<organism>
    <name type="scientific">Synechococcus sp. (strain JA-3-3Ab)</name>
    <name type="common">Cyanobacteria bacterium Yellowstone A-Prime</name>
    <dbReference type="NCBI Taxonomy" id="321327"/>
    <lineage>
        <taxon>Bacteria</taxon>
        <taxon>Bacillati</taxon>
        <taxon>Cyanobacteriota</taxon>
        <taxon>Cyanophyceae</taxon>
        <taxon>Synechococcales</taxon>
        <taxon>Synechococcaceae</taxon>
        <taxon>Synechococcus</taxon>
    </lineage>
</organism>